<reference key="1">
    <citation type="journal article" date="2005" name="Mol. Biol. Evol.">
        <title>Evolution of bitter taste receptors in humans and apes.</title>
        <authorList>
            <person name="Fischer A."/>
            <person name="Gilad Y."/>
            <person name="Man O."/>
            <person name="Paeaebo S."/>
        </authorList>
    </citation>
    <scope>NUCLEOTIDE SEQUENCE [GENOMIC DNA]</scope>
</reference>
<feature type="chain" id="PRO_0000082306" description="Taste receptor type 2 member 43">
    <location>
        <begin position="1"/>
        <end position="308"/>
    </location>
</feature>
<feature type="topological domain" description="Extracellular" evidence="2">
    <location>
        <position position="1"/>
    </location>
</feature>
<feature type="transmembrane region" description="Helical; Name=1" evidence="2">
    <location>
        <begin position="2"/>
        <end position="22"/>
    </location>
</feature>
<feature type="topological domain" description="Cytoplasmic" evidence="2">
    <location>
        <begin position="23"/>
        <end position="46"/>
    </location>
</feature>
<feature type="transmembrane region" description="Helical; Name=2" evidence="2">
    <location>
        <begin position="47"/>
        <end position="67"/>
    </location>
</feature>
<feature type="topological domain" description="Extracellular" evidence="2">
    <location>
        <begin position="68"/>
        <end position="86"/>
    </location>
</feature>
<feature type="transmembrane region" description="Helical; Name=3" evidence="2">
    <location>
        <begin position="87"/>
        <end position="107"/>
    </location>
</feature>
<feature type="topological domain" description="Cytoplasmic" evidence="2">
    <location>
        <begin position="108"/>
        <end position="126"/>
    </location>
</feature>
<feature type="transmembrane region" description="Helical; Name=4" evidence="2">
    <location>
        <begin position="127"/>
        <end position="147"/>
    </location>
</feature>
<feature type="topological domain" description="Extracellular" evidence="2">
    <location>
        <begin position="148"/>
        <end position="178"/>
    </location>
</feature>
<feature type="transmembrane region" description="Helical; Name=5" evidence="2">
    <location>
        <begin position="179"/>
        <end position="199"/>
    </location>
</feature>
<feature type="topological domain" description="Cytoplasmic" evidence="2">
    <location>
        <begin position="200"/>
        <end position="229"/>
    </location>
</feature>
<feature type="transmembrane region" description="Helical; Name=6" evidence="2">
    <location>
        <begin position="230"/>
        <end position="249"/>
    </location>
</feature>
<feature type="topological domain" description="Extracellular" evidence="2">
    <location>
        <begin position="250"/>
        <end position="258"/>
    </location>
</feature>
<feature type="transmembrane region" description="Helical; Name=7" evidence="2">
    <location>
        <begin position="259"/>
        <end position="279"/>
    </location>
</feature>
<feature type="topological domain" description="Cytoplasmic" evidence="2">
    <location>
        <begin position="280"/>
        <end position="308"/>
    </location>
</feature>
<feature type="glycosylation site" description="N-linked (GlcNAc...) asparagine" evidence="2">
    <location>
        <position position="161"/>
    </location>
</feature>
<feature type="glycosylation site" description="N-linked (GlcNAc...) asparagine" evidence="2">
    <location>
        <position position="176"/>
    </location>
</feature>
<proteinExistence type="inferred from homology"/>
<name>T2R43_PAPHA</name>
<sequence length="308" mass="35168">MITFLPIIFSILVVVTFVIGNCANGFIALVNSTEWVKRQKISFADQILTALAVSRVGLLWVLLLNWYATVLNPAFYSVEVRTIVYNLWAVINHFSNWLATSLSIFYLLKIANFSNLIFLHLKRRVKSVVLVILLGPLLFLVCHLFVVNMNEIVRTKEYEGNMTWKSKLRSAMYLSNTTVTILANLVPFILTLISFLLLICSLCKHLKKMQLRDKGSQDPSTKVHIKALQTVISLLLCVIYFLSIMISSWSLGRVENKAVFMFCKAIRFSYPSAHAFILIWGNKKLKQTLLSVLWNVRYCVKGQKLPSP</sequence>
<comment type="function">
    <text evidence="1">Gustducin-coupled receptor immplicated in the perception of bitter compounds in the oral cavity and the gastrointestinal tract. Signals through PLCB2 and the calcium-regulated cation channel TRPM5. Activated by the sulfonyl amide sweeteners saccharin and acesulfame K. In airway epithelial cells, binding of bitter compounds increases the intracellular calcium ion concentration and stimulates ciliary beat frequency. May act as chemosensory receptors in airway epithelial cells to detect and eliminate potential noxious agents from the airways (By similarity).</text>
</comment>
<comment type="subcellular location">
    <subcellularLocation>
        <location>Membrane</location>
        <topology>Multi-pass membrane protein</topology>
    </subcellularLocation>
    <subcellularLocation>
        <location evidence="1">Cell projection</location>
        <location evidence="1">Cilium membrane</location>
    </subcellularLocation>
    <text evidence="1">In airway epithelial cells, localizes to motile cilia.</text>
</comment>
<comment type="miscellaneous">
    <text>Most taste cells may be activated by a limited number of bitter compounds; individual taste cells can discriminate among bitter stimuli.</text>
</comment>
<comment type="similarity">
    <text evidence="3">Belongs to the G-protein coupled receptor T2R family.</text>
</comment>
<gene>
    <name type="primary">TAS2R43</name>
</gene>
<accession>Q646F8</accession>
<keyword id="KW-1003">Cell membrane</keyword>
<keyword id="KW-0966">Cell projection</keyword>
<keyword id="KW-0969">Cilium</keyword>
<keyword id="KW-0297">G-protein coupled receptor</keyword>
<keyword id="KW-0325">Glycoprotein</keyword>
<keyword id="KW-0472">Membrane</keyword>
<keyword id="KW-0675">Receptor</keyword>
<keyword id="KW-0716">Sensory transduction</keyword>
<keyword id="KW-0919">Taste</keyword>
<keyword id="KW-0807">Transducer</keyword>
<keyword id="KW-0812">Transmembrane</keyword>
<keyword id="KW-1133">Transmembrane helix</keyword>
<dbReference type="EMBL" id="AY724824">
    <property type="protein sequence ID" value="AAU21061.1"/>
    <property type="molecule type" value="Genomic_DNA"/>
</dbReference>
<dbReference type="SMR" id="Q646F8"/>
<dbReference type="GlyCosmos" id="Q646F8">
    <property type="glycosylation" value="2 sites, No reported glycans"/>
</dbReference>
<dbReference type="GO" id="GO:0060170">
    <property type="term" value="C:ciliary membrane"/>
    <property type="evidence" value="ECO:0007669"/>
    <property type="project" value="UniProtKB-SubCell"/>
</dbReference>
<dbReference type="GO" id="GO:0031514">
    <property type="term" value="C:motile cilium"/>
    <property type="evidence" value="ECO:0000250"/>
    <property type="project" value="UniProtKB"/>
</dbReference>
<dbReference type="GO" id="GO:0033038">
    <property type="term" value="F:bitter taste receptor activity"/>
    <property type="evidence" value="ECO:0007669"/>
    <property type="project" value="InterPro"/>
</dbReference>
<dbReference type="GO" id="GO:0004930">
    <property type="term" value="F:G protein-coupled receptor activity"/>
    <property type="evidence" value="ECO:0007669"/>
    <property type="project" value="UniProtKB-KW"/>
</dbReference>
<dbReference type="CDD" id="cd15027">
    <property type="entry name" value="7tm_TAS2R43-like"/>
    <property type="match status" value="1"/>
</dbReference>
<dbReference type="FunFam" id="1.20.1070.10:FF:000042">
    <property type="entry name" value="Taste receptor type 2 member 7"/>
    <property type="match status" value="1"/>
</dbReference>
<dbReference type="Gene3D" id="1.20.1070.10">
    <property type="entry name" value="Rhodopsin 7-helix transmembrane proteins"/>
    <property type="match status" value="1"/>
</dbReference>
<dbReference type="InterPro" id="IPR007960">
    <property type="entry name" value="TAS2R"/>
</dbReference>
<dbReference type="PANTHER" id="PTHR11394">
    <property type="entry name" value="TASTE RECEPTOR TYPE 2"/>
    <property type="match status" value="1"/>
</dbReference>
<dbReference type="PANTHER" id="PTHR11394:SF66">
    <property type="entry name" value="TASTE RECEPTOR TYPE 2 MEMBER 46"/>
    <property type="match status" value="1"/>
</dbReference>
<dbReference type="Pfam" id="PF05296">
    <property type="entry name" value="TAS2R"/>
    <property type="match status" value="1"/>
</dbReference>
<dbReference type="SUPFAM" id="SSF81321">
    <property type="entry name" value="Family A G protein-coupled receptor-like"/>
    <property type="match status" value="1"/>
</dbReference>
<evidence type="ECO:0000250" key="1"/>
<evidence type="ECO:0000255" key="2"/>
<evidence type="ECO:0000305" key="3"/>
<organism>
    <name type="scientific">Papio hamadryas</name>
    <name type="common">Hamadryas baboon</name>
    <dbReference type="NCBI Taxonomy" id="9557"/>
    <lineage>
        <taxon>Eukaryota</taxon>
        <taxon>Metazoa</taxon>
        <taxon>Chordata</taxon>
        <taxon>Craniata</taxon>
        <taxon>Vertebrata</taxon>
        <taxon>Euteleostomi</taxon>
        <taxon>Mammalia</taxon>
        <taxon>Eutheria</taxon>
        <taxon>Euarchontoglires</taxon>
        <taxon>Primates</taxon>
        <taxon>Haplorrhini</taxon>
        <taxon>Catarrhini</taxon>
        <taxon>Cercopithecidae</taxon>
        <taxon>Cercopithecinae</taxon>
        <taxon>Papio</taxon>
    </lineage>
</organism>
<protein>
    <recommendedName>
        <fullName>Taste receptor type 2 member 43</fullName>
        <shortName>T2R43</shortName>
    </recommendedName>
</protein>